<name>ALR_MYCLE</name>
<feature type="chain" id="PRO_0000114537" description="Alanine racemase">
    <location>
        <begin position="1"/>
        <end position="388"/>
    </location>
</feature>
<feature type="active site" description="Proton acceptor; specific for D-alanine" evidence="1">
    <location>
        <position position="44"/>
    </location>
</feature>
<feature type="active site" description="Proton acceptor; specific for L-alanine" evidence="1">
    <location>
        <position position="273"/>
    </location>
</feature>
<feature type="binding site" evidence="1">
    <location>
        <position position="142"/>
    </location>
    <ligand>
        <name>substrate</name>
    </ligand>
</feature>
<feature type="binding site" evidence="1">
    <location>
        <position position="321"/>
    </location>
    <ligand>
        <name>substrate</name>
    </ligand>
</feature>
<feature type="modified residue" description="N6-(pyridoxal phosphate)lysine" evidence="1">
    <location>
        <position position="44"/>
    </location>
</feature>
<protein>
    <recommendedName>
        <fullName evidence="1">Alanine racemase</fullName>
        <ecNumber evidence="1">5.1.1.1</ecNumber>
    </recommendedName>
</protein>
<organism>
    <name type="scientific">Mycobacterium leprae (strain TN)</name>
    <dbReference type="NCBI Taxonomy" id="272631"/>
    <lineage>
        <taxon>Bacteria</taxon>
        <taxon>Bacillati</taxon>
        <taxon>Actinomycetota</taxon>
        <taxon>Actinomycetes</taxon>
        <taxon>Mycobacteriales</taxon>
        <taxon>Mycobacteriaceae</taxon>
        <taxon>Mycobacterium</taxon>
    </lineage>
</organism>
<evidence type="ECO:0000255" key="1">
    <source>
        <dbReference type="HAMAP-Rule" id="MF_01201"/>
    </source>
</evidence>
<keyword id="KW-0413">Isomerase</keyword>
<keyword id="KW-0663">Pyridoxal phosphate</keyword>
<keyword id="KW-1185">Reference proteome</keyword>
<dbReference type="EC" id="5.1.1.1" evidence="1"/>
<dbReference type="EMBL" id="U00020">
    <property type="protein sequence ID" value="AAA17309.1"/>
    <property type="molecule type" value="Genomic_DNA"/>
</dbReference>
<dbReference type="EMBL" id="AL583918">
    <property type="protein sequence ID" value="CAC29883.1"/>
    <property type="molecule type" value="Genomic_DNA"/>
</dbReference>
<dbReference type="PIR" id="S72995">
    <property type="entry name" value="S72995"/>
</dbReference>
<dbReference type="RefSeq" id="NP_301367.1">
    <property type="nucleotide sequence ID" value="NC_002677.1"/>
</dbReference>
<dbReference type="RefSeq" id="WP_010907691.1">
    <property type="nucleotide sequence ID" value="NC_002677.1"/>
</dbReference>
<dbReference type="SMR" id="P38056"/>
<dbReference type="STRING" id="272631.gene:17574194"/>
<dbReference type="KEGG" id="mle:ML0375"/>
<dbReference type="PATRIC" id="fig|272631.5.peg.637"/>
<dbReference type="Leproma" id="ML0375"/>
<dbReference type="eggNOG" id="COG0787">
    <property type="taxonomic scope" value="Bacteria"/>
</dbReference>
<dbReference type="HOGENOM" id="CLU_028393_0_0_11"/>
<dbReference type="OrthoDB" id="9813814at2"/>
<dbReference type="UniPathway" id="UPA00042">
    <property type="reaction ID" value="UER00497"/>
</dbReference>
<dbReference type="Proteomes" id="UP000000806">
    <property type="component" value="Chromosome"/>
</dbReference>
<dbReference type="GO" id="GO:0005829">
    <property type="term" value="C:cytosol"/>
    <property type="evidence" value="ECO:0007669"/>
    <property type="project" value="TreeGrafter"/>
</dbReference>
<dbReference type="GO" id="GO:0008784">
    <property type="term" value="F:alanine racemase activity"/>
    <property type="evidence" value="ECO:0007669"/>
    <property type="project" value="UniProtKB-UniRule"/>
</dbReference>
<dbReference type="GO" id="GO:0030170">
    <property type="term" value="F:pyridoxal phosphate binding"/>
    <property type="evidence" value="ECO:0007669"/>
    <property type="project" value="UniProtKB-UniRule"/>
</dbReference>
<dbReference type="GO" id="GO:0030632">
    <property type="term" value="P:D-alanine biosynthetic process"/>
    <property type="evidence" value="ECO:0007669"/>
    <property type="project" value="UniProtKB-UniRule"/>
</dbReference>
<dbReference type="GO" id="GO:0009252">
    <property type="term" value="P:peptidoglycan biosynthetic process"/>
    <property type="evidence" value="ECO:0007669"/>
    <property type="project" value="TreeGrafter"/>
</dbReference>
<dbReference type="CDD" id="cd00430">
    <property type="entry name" value="PLPDE_III_AR"/>
    <property type="match status" value="1"/>
</dbReference>
<dbReference type="FunFam" id="2.40.37.10:FF:000015">
    <property type="entry name" value="Alanine racemase"/>
    <property type="match status" value="1"/>
</dbReference>
<dbReference type="FunFam" id="3.20.20.10:FF:000002">
    <property type="entry name" value="Alanine racemase"/>
    <property type="match status" value="1"/>
</dbReference>
<dbReference type="Gene3D" id="3.20.20.10">
    <property type="entry name" value="Alanine racemase"/>
    <property type="match status" value="1"/>
</dbReference>
<dbReference type="Gene3D" id="2.40.37.10">
    <property type="entry name" value="Lyase, Ornithine Decarboxylase, Chain A, domain 1"/>
    <property type="match status" value="1"/>
</dbReference>
<dbReference type="HAMAP" id="MF_01201">
    <property type="entry name" value="Ala_racemase"/>
    <property type="match status" value="1"/>
</dbReference>
<dbReference type="InterPro" id="IPR000821">
    <property type="entry name" value="Ala_racemase"/>
</dbReference>
<dbReference type="InterPro" id="IPR009006">
    <property type="entry name" value="Ala_racemase/Decarboxylase_C"/>
</dbReference>
<dbReference type="InterPro" id="IPR011079">
    <property type="entry name" value="Ala_racemase_C"/>
</dbReference>
<dbReference type="InterPro" id="IPR001608">
    <property type="entry name" value="Ala_racemase_N"/>
</dbReference>
<dbReference type="InterPro" id="IPR020622">
    <property type="entry name" value="Ala_racemase_pyridoxalP-BS"/>
</dbReference>
<dbReference type="InterPro" id="IPR029066">
    <property type="entry name" value="PLP-binding_barrel"/>
</dbReference>
<dbReference type="NCBIfam" id="TIGR00492">
    <property type="entry name" value="alr"/>
    <property type="match status" value="1"/>
</dbReference>
<dbReference type="PANTHER" id="PTHR30511">
    <property type="entry name" value="ALANINE RACEMASE"/>
    <property type="match status" value="1"/>
</dbReference>
<dbReference type="PANTHER" id="PTHR30511:SF0">
    <property type="entry name" value="ALANINE RACEMASE, CATABOLIC-RELATED"/>
    <property type="match status" value="1"/>
</dbReference>
<dbReference type="Pfam" id="PF00842">
    <property type="entry name" value="Ala_racemase_C"/>
    <property type="match status" value="1"/>
</dbReference>
<dbReference type="Pfam" id="PF01168">
    <property type="entry name" value="Ala_racemase_N"/>
    <property type="match status" value="1"/>
</dbReference>
<dbReference type="PRINTS" id="PR00992">
    <property type="entry name" value="ALARACEMASE"/>
</dbReference>
<dbReference type="SMART" id="SM01005">
    <property type="entry name" value="Ala_racemase_C"/>
    <property type="match status" value="1"/>
</dbReference>
<dbReference type="SUPFAM" id="SSF50621">
    <property type="entry name" value="Alanine racemase C-terminal domain-like"/>
    <property type="match status" value="1"/>
</dbReference>
<dbReference type="SUPFAM" id="SSF51419">
    <property type="entry name" value="PLP-binding barrel"/>
    <property type="match status" value="1"/>
</dbReference>
<dbReference type="PROSITE" id="PS00395">
    <property type="entry name" value="ALANINE_RACEMASE"/>
    <property type="match status" value="1"/>
</dbReference>
<comment type="function">
    <text evidence="1">Catalyzes the interconversion of L-alanine and D-alanine. May also act on other amino acids.</text>
</comment>
<comment type="catalytic activity">
    <reaction evidence="1">
        <text>L-alanine = D-alanine</text>
        <dbReference type="Rhea" id="RHEA:20249"/>
        <dbReference type="ChEBI" id="CHEBI:57416"/>
        <dbReference type="ChEBI" id="CHEBI:57972"/>
        <dbReference type="EC" id="5.1.1.1"/>
    </reaction>
</comment>
<comment type="cofactor">
    <cofactor evidence="1">
        <name>pyridoxal 5'-phosphate</name>
        <dbReference type="ChEBI" id="CHEBI:597326"/>
    </cofactor>
</comment>
<comment type="pathway">
    <text evidence="1">Amino-acid biosynthesis; D-alanine biosynthesis; D-alanine from L-alanine: step 1/1.</text>
</comment>
<comment type="similarity">
    <text evidence="1">Belongs to the alanine racemase family.</text>
</comment>
<proteinExistence type="inferred from homology"/>
<reference key="1">
    <citation type="submission" date="1994-03" db="EMBL/GenBank/DDBJ databases">
        <authorList>
            <person name="Smith D.R."/>
            <person name="Robison K."/>
        </authorList>
    </citation>
    <scope>NUCLEOTIDE SEQUENCE [GENOMIC DNA]</scope>
</reference>
<reference key="2">
    <citation type="journal article" date="2001" name="Nature">
        <title>Massive gene decay in the leprosy bacillus.</title>
        <authorList>
            <person name="Cole S.T."/>
            <person name="Eiglmeier K."/>
            <person name="Parkhill J."/>
            <person name="James K.D."/>
            <person name="Thomson N.R."/>
            <person name="Wheeler P.R."/>
            <person name="Honore N."/>
            <person name="Garnier T."/>
            <person name="Churcher C.M."/>
            <person name="Harris D.E."/>
            <person name="Mungall K.L."/>
            <person name="Basham D."/>
            <person name="Brown D."/>
            <person name="Chillingworth T."/>
            <person name="Connor R."/>
            <person name="Davies R.M."/>
            <person name="Devlin K."/>
            <person name="Duthoy S."/>
            <person name="Feltwell T."/>
            <person name="Fraser A."/>
            <person name="Hamlin N."/>
            <person name="Holroyd S."/>
            <person name="Hornsby T."/>
            <person name="Jagels K."/>
            <person name="Lacroix C."/>
            <person name="Maclean J."/>
            <person name="Moule S."/>
            <person name="Murphy L.D."/>
            <person name="Oliver K."/>
            <person name="Quail M.A."/>
            <person name="Rajandream M.A."/>
            <person name="Rutherford K.M."/>
            <person name="Rutter S."/>
            <person name="Seeger K."/>
            <person name="Simon S."/>
            <person name="Simmonds M."/>
            <person name="Skelton J."/>
            <person name="Squares R."/>
            <person name="Squares S."/>
            <person name="Stevens K."/>
            <person name="Taylor K."/>
            <person name="Whitehead S."/>
            <person name="Woodward J.R."/>
            <person name="Barrell B.G."/>
        </authorList>
    </citation>
    <scope>NUCLEOTIDE SEQUENCE [LARGE SCALE GENOMIC DNA]</scope>
    <source>
        <strain>TN</strain>
    </source>
</reference>
<sequence>MAVTPISLRPGVLAEAVVDLGAIDYNVRVLREHAGMAQLMVVLKADAYGHGATQVALAALAAGAAELGVATVDEALALRADGISAPVLAWLHPPGIDFGPALLADVQIAVSSVRQLDELLDAVRRTGRTATVTVKADTGLNRNGVVTDQYPAMLTALQRAVVEDAVRLRGLMSHLVYADQPDNPSNDVQGKRFAALLAQAHEQGLRFEVAHLSNSSATMSRPDLAYDLVRPGIAVYGLSPVPSRGDMGLIPAMTVKCAVAMVKSIRAGEGVSYGHDWIAQHDTNLALLPVGYADGVFRSLGGRLDVLINGKRRPGVGRICMDQFVVDLGPGPIDVAEGDEAILFGPGARGEPTAQDWADLLGTIHYEVVTSLRGRITRTYREAQTVDR</sequence>
<gene>
    <name type="primary">alr</name>
    <name type="ordered locus">ML0375</name>
    <name type="ORF">B229_C3_243</name>
</gene>
<accession>P38056</accession>